<gene>
    <name type="primary">SSO2</name>
    <name type="ordered locus">CAALFM_C209740WA</name>
    <name type="ORF">CaO19.1376</name>
    <name type="ORF">CaO19.8956</name>
</gene>
<dbReference type="EMBL" id="CP017624">
    <property type="protein sequence ID" value="AOW27952.1"/>
    <property type="molecule type" value="Genomic_DNA"/>
</dbReference>
<dbReference type="RefSeq" id="XP_714550.1">
    <property type="nucleotide sequence ID" value="XM_709457.1"/>
</dbReference>
<dbReference type="SMR" id="Q59YF0"/>
<dbReference type="FunCoup" id="Q59YF0">
    <property type="interactions" value="608"/>
</dbReference>
<dbReference type="STRING" id="237561.Q59YF0"/>
<dbReference type="EnsemblFungi" id="C2_09740W_A-T">
    <property type="protein sequence ID" value="C2_09740W_A-T-p1"/>
    <property type="gene ID" value="C2_09740W_A"/>
</dbReference>
<dbReference type="GeneID" id="3643809"/>
<dbReference type="KEGG" id="cal:CAALFM_C209740WA"/>
<dbReference type="CGD" id="CAL0000181188">
    <property type="gene designation" value="SSO2"/>
</dbReference>
<dbReference type="VEuPathDB" id="FungiDB:C2_09740W_A"/>
<dbReference type="eggNOG" id="KOG0810">
    <property type="taxonomic scope" value="Eukaryota"/>
</dbReference>
<dbReference type="HOGENOM" id="CLU_042423_0_1_1"/>
<dbReference type="InParanoid" id="Q59YF0"/>
<dbReference type="OMA" id="RWICFIL"/>
<dbReference type="OrthoDB" id="10255013at2759"/>
<dbReference type="PRO" id="PR:Q59YF0"/>
<dbReference type="Proteomes" id="UP000000559">
    <property type="component" value="Chromosome 2"/>
</dbReference>
<dbReference type="GO" id="GO:0012505">
    <property type="term" value="C:endomembrane system"/>
    <property type="evidence" value="ECO:0000318"/>
    <property type="project" value="GO_Central"/>
</dbReference>
<dbReference type="GO" id="GO:1903561">
    <property type="term" value="C:extracellular vesicle"/>
    <property type="evidence" value="ECO:0000314"/>
    <property type="project" value="CGD"/>
</dbReference>
<dbReference type="GO" id="GO:0005886">
    <property type="term" value="C:plasma membrane"/>
    <property type="evidence" value="ECO:0000318"/>
    <property type="project" value="GO_Central"/>
</dbReference>
<dbReference type="GO" id="GO:0031201">
    <property type="term" value="C:SNARE complex"/>
    <property type="evidence" value="ECO:0000318"/>
    <property type="project" value="GO_Central"/>
</dbReference>
<dbReference type="GO" id="GO:0005484">
    <property type="term" value="F:SNAP receptor activity"/>
    <property type="evidence" value="ECO:0000318"/>
    <property type="project" value="GO_Central"/>
</dbReference>
<dbReference type="GO" id="GO:0000149">
    <property type="term" value="F:SNARE binding"/>
    <property type="evidence" value="ECO:0000318"/>
    <property type="project" value="GO_Central"/>
</dbReference>
<dbReference type="GO" id="GO:0006887">
    <property type="term" value="P:exocytosis"/>
    <property type="evidence" value="ECO:0000318"/>
    <property type="project" value="GO_Central"/>
</dbReference>
<dbReference type="GO" id="GO:0030448">
    <property type="term" value="P:hyphal growth"/>
    <property type="evidence" value="ECO:0000315"/>
    <property type="project" value="CGD"/>
</dbReference>
<dbReference type="GO" id="GO:0006886">
    <property type="term" value="P:intracellular protein transport"/>
    <property type="evidence" value="ECO:0000318"/>
    <property type="project" value="GO_Central"/>
</dbReference>
<dbReference type="GO" id="GO:0009306">
    <property type="term" value="P:protein secretion"/>
    <property type="evidence" value="ECO:0000315"/>
    <property type="project" value="CGD"/>
</dbReference>
<dbReference type="GO" id="GO:0048278">
    <property type="term" value="P:vesicle docking"/>
    <property type="evidence" value="ECO:0000318"/>
    <property type="project" value="GO_Central"/>
</dbReference>
<dbReference type="GO" id="GO:0006906">
    <property type="term" value="P:vesicle fusion"/>
    <property type="evidence" value="ECO:0000318"/>
    <property type="project" value="GO_Central"/>
</dbReference>
<dbReference type="CDD" id="cd15849">
    <property type="entry name" value="SNARE_Sso1"/>
    <property type="match status" value="1"/>
</dbReference>
<dbReference type="FunFam" id="1.20.58.70:FF:000008">
    <property type="entry name" value="Syntaxin family protein"/>
    <property type="match status" value="1"/>
</dbReference>
<dbReference type="Gene3D" id="1.20.58.70">
    <property type="match status" value="1"/>
</dbReference>
<dbReference type="InterPro" id="IPR010989">
    <property type="entry name" value="SNARE"/>
</dbReference>
<dbReference type="InterPro" id="IPR045242">
    <property type="entry name" value="Syntaxin"/>
</dbReference>
<dbReference type="InterPro" id="IPR006012">
    <property type="entry name" value="Syntaxin/epimorphin_CS"/>
</dbReference>
<dbReference type="InterPro" id="IPR006011">
    <property type="entry name" value="Syntaxin_N"/>
</dbReference>
<dbReference type="InterPro" id="IPR000727">
    <property type="entry name" value="T_SNARE_dom"/>
</dbReference>
<dbReference type="PANTHER" id="PTHR19957:SF307">
    <property type="entry name" value="PROTEIN SSO1-RELATED"/>
    <property type="match status" value="1"/>
</dbReference>
<dbReference type="PANTHER" id="PTHR19957">
    <property type="entry name" value="SYNTAXIN"/>
    <property type="match status" value="1"/>
</dbReference>
<dbReference type="Pfam" id="PF05739">
    <property type="entry name" value="SNARE"/>
    <property type="match status" value="1"/>
</dbReference>
<dbReference type="Pfam" id="PF00804">
    <property type="entry name" value="Syntaxin"/>
    <property type="match status" value="1"/>
</dbReference>
<dbReference type="SMART" id="SM00397">
    <property type="entry name" value="t_SNARE"/>
    <property type="match status" value="1"/>
</dbReference>
<dbReference type="SUPFAM" id="SSF47661">
    <property type="entry name" value="t-snare proteins"/>
    <property type="match status" value="1"/>
</dbReference>
<dbReference type="PROSITE" id="PS00914">
    <property type="entry name" value="SYNTAXIN"/>
    <property type="match status" value="1"/>
</dbReference>
<dbReference type="PROSITE" id="PS50192">
    <property type="entry name" value="T_SNARE"/>
    <property type="match status" value="1"/>
</dbReference>
<comment type="function">
    <text evidence="5">Late secretory t-SNARE protein required for secretion and proper cytokinesis. Plays an important role in the secretion of virulence-associated extracellular enzymes and vesicle-mediated polarized hyphal growth.</text>
</comment>
<comment type="subcellular location">
    <subcellularLocation>
        <location evidence="1">Membrane</location>
        <topology evidence="1">Single-pass type IV membrane protein</topology>
    </subcellularLocation>
</comment>
<comment type="disruption phenotype">
    <text evidence="5">Leads to defects in secretion of degradative enzymes and defects in hyphal extension. Also leads to the Spitzenkoerper dissipation and accumulation of secretory vesicles.</text>
</comment>
<comment type="similarity">
    <text evidence="3">Belongs to the syntaxin family.</text>
</comment>
<sequence length="295" mass="34308">MSNPYQNSQNGYQQNNSYELNNYPNKQYSSSNEDDFVQFMNEIQDINSQLDNYSNIINLIDNKQKNFLHGLDLNDEDTDYDSKQIENLVNEAQSLQLDLKNRIKNVQTQAVHSRDQTKVDQAETCRKRFLDLIQDYRLVEARNKESTKEQAARQYQIIKPDATDEEIKAVVEDGSQQYFQQALMQSNRRGEARSVLNEVQVRHRELLKLEKTMAELTQLFHDMEELVIEQDQPIQQIEEQVGTAQHDIEQGVGHTNKAVKSAKSARKKKLWCFFICLLIVIILAVILGAYFGTRK</sequence>
<reference key="1">
    <citation type="journal article" date="2004" name="Proc. Natl. Acad. Sci. U.S.A.">
        <title>The diploid genome sequence of Candida albicans.</title>
        <authorList>
            <person name="Jones T."/>
            <person name="Federspiel N.A."/>
            <person name="Chibana H."/>
            <person name="Dungan J."/>
            <person name="Kalman S."/>
            <person name="Magee B.B."/>
            <person name="Newport G."/>
            <person name="Thorstenson Y.R."/>
            <person name="Agabian N."/>
            <person name="Magee P.T."/>
            <person name="Davis R.W."/>
            <person name="Scherer S."/>
        </authorList>
    </citation>
    <scope>NUCLEOTIDE SEQUENCE [LARGE SCALE GENOMIC DNA]</scope>
    <source>
        <strain>SC5314 / ATCC MYA-2876</strain>
    </source>
</reference>
<reference key="2">
    <citation type="journal article" date="2007" name="Genome Biol.">
        <title>Assembly of the Candida albicans genome into sixteen supercontigs aligned on the eight chromosomes.</title>
        <authorList>
            <person name="van het Hoog M."/>
            <person name="Rast T.J."/>
            <person name="Martchenko M."/>
            <person name="Grindle S."/>
            <person name="Dignard D."/>
            <person name="Hogues H."/>
            <person name="Cuomo C."/>
            <person name="Berriman M."/>
            <person name="Scherer S."/>
            <person name="Magee B.B."/>
            <person name="Whiteway M."/>
            <person name="Chibana H."/>
            <person name="Nantel A."/>
            <person name="Magee P.T."/>
        </authorList>
    </citation>
    <scope>GENOME REANNOTATION</scope>
    <source>
        <strain>SC5314 / ATCC MYA-2876</strain>
    </source>
</reference>
<reference key="3">
    <citation type="journal article" date="2013" name="Genome Biol.">
        <title>Assembly of a phased diploid Candida albicans genome facilitates allele-specific measurements and provides a simple model for repeat and indel structure.</title>
        <authorList>
            <person name="Muzzey D."/>
            <person name="Schwartz K."/>
            <person name="Weissman J.S."/>
            <person name="Sherlock G."/>
        </authorList>
    </citation>
    <scope>NUCLEOTIDE SEQUENCE [LARGE SCALE GENOMIC DNA]</scope>
    <scope>GENOME REANNOTATION</scope>
    <source>
        <strain>SC5314 / ATCC MYA-2876</strain>
    </source>
</reference>
<reference key="4">
    <citation type="journal article" date="2014" name="FEMS Yeast Res.">
        <title>Secretion and filamentation are mediated by the Candida albicans t-SNAREs Sso2p and Sec9p.</title>
        <authorList>
            <person name="Bernardo S.M."/>
            <person name="Rane H.S."/>
            <person name="Chavez-Dozal A."/>
            <person name="Lee S.A."/>
        </authorList>
    </citation>
    <scope>FUNCTION</scope>
    <scope>DISRUPTION PHENOTYPE</scope>
</reference>
<proteinExistence type="inferred from homology"/>
<protein>
    <recommendedName>
        <fullName evidence="6">Protein transport protein SSO2</fullName>
    </recommendedName>
</protein>
<organism>
    <name type="scientific">Candida albicans (strain SC5314 / ATCC MYA-2876)</name>
    <name type="common">Yeast</name>
    <dbReference type="NCBI Taxonomy" id="237561"/>
    <lineage>
        <taxon>Eukaryota</taxon>
        <taxon>Fungi</taxon>
        <taxon>Dikarya</taxon>
        <taxon>Ascomycota</taxon>
        <taxon>Saccharomycotina</taxon>
        <taxon>Pichiomycetes</taxon>
        <taxon>Debaryomycetaceae</taxon>
        <taxon>Candida/Lodderomyces clade</taxon>
        <taxon>Candida</taxon>
    </lineage>
</organism>
<name>SSO2_CANAL</name>
<keyword id="KW-0175">Coiled coil</keyword>
<keyword id="KW-0472">Membrane</keyword>
<keyword id="KW-0653">Protein transport</keyword>
<keyword id="KW-1185">Reference proteome</keyword>
<keyword id="KW-0812">Transmembrane</keyword>
<keyword id="KW-1133">Transmembrane helix</keyword>
<keyword id="KW-0813">Transport</keyword>
<keyword id="KW-0843">Virulence</keyword>
<evidence type="ECO:0000255" key="1"/>
<evidence type="ECO:0000255" key="2">
    <source>
        <dbReference type="PROSITE-ProRule" id="PRU00202"/>
    </source>
</evidence>
<evidence type="ECO:0000255" key="3">
    <source>
        <dbReference type="RuleBase" id="RU003858"/>
    </source>
</evidence>
<evidence type="ECO:0000256" key="4">
    <source>
        <dbReference type="SAM" id="MobiDB-lite"/>
    </source>
</evidence>
<evidence type="ECO:0000269" key="5">
    <source>
    </source>
</evidence>
<evidence type="ECO:0000305" key="6"/>
<accession>Q59YF0</accession>
<accession>A0A1D8PIJ6</accession>
<feature type="chain" id="PRO_0000431520" description="Protein transport protein SSO2">
    <location>
        <begin position="1"/>
        <end position="295"/>
    </location>
</feature>
<feature type="topological domain" description="Cytoplasmic" evidence="6">
    <location>
        <begin position="1"/>
        <end position="270"/>
    </location>
</feature>
<feature type="transmembrane region" description="Helical; Anchor for type IV membrane protein" evidence="1">
    <location>
        <begin position="271"/>
        <end position="291"/>
    </location>
</feature>
<feature type="topological domain" description="Extracellular" evidence="6">
    <location>
        <begin position="292"/>
        <end position="295"/>
    </location>
</feature>
<feature type="domain" description="t-SNARE coiled-coil homology" evidence="2">
    <location>
        <begin position="196"/>
        <end position="258"/>
    </location>
</feature>
<feature type="region of interest" description="Disordered" evidence="4">
    <location>
        <begin position="1"/>
        <end position="31"/>
    </location>
</feature>
<feature type="coiled-coil region" evidence="1">
    <location>
        <begin position="33"/>
        <end position="110"/>
    </location>
</feature>
<feature type="compositionally biased region" description="Low complexity" evidence="4">
    <location>
        <begin position="1"/>
        <end position="18"/>
    </location>
</feature>
<feature type="compositionally biased region" description="Polar residues" evidence="4">
    <location>
        <begin position="19"/>
        <end position="31"/>
    </location>
</feature>